<accession>Q9K706</accession>
<reference key="1">
    <citation type="journal article" date="2000" name="Nucleic Acids Res.">
        <title>Complete genome sequence of the alkaliphilic bacterium Bacillus halodurans and genomic sequence comparison with Bacillus subtilis.</title>
        <authorList>
            <person name="Takami H."/>
            <person name="Nakasone K."/>
            <person name="Takaki Y."/>
            <person name="Maeno G."/>
            <person name="Sasaki R."/>
            <person name="Masui N."/>
            <person name="Fuji F."/>
            <person name="Hirama C."/>
            <person name="Nakamura Y."/>
            <person name="Ogasawara N."/>
            <person name="Kuhara S."/>
            <person name="Horikoshi K."/>
        </authorList>
    </citation>
    <scope>NUCLEOTIDE SEQUENCE [LARGE SCALE GENOMIC DNA]</scope>
    <source>
        <strain>ATCC BAA-125 / DSM 18197 / FERM 7344 / JCM 9153 / C-125</strain>
    </source>
</reference>
<reference key="2">
    <citation type="submission" date="2006-08" db="PDB data bank">
        <title>X-ray structure of the hypothetical UPF0052 protein BH3568 from Bacillus halodurans.</title>
        <authorList>
            <person name="Kuzin A.P."/>
            <person name="Chen Y."/>
            <person name="Seetharaman J."/>
            <person name="Benach J."/>
            <person name="Shastry R."/>
            <person name="Conover K."/>
            <person name="Ma L.C."/>
            <person name="Xiao R."/>
            <person name="Liu J."/>
            <person name="Baran M.C."/>
            <person name="Acton T.B."/>
            <person name="Rost B."/>
            <person name="Montelione G.T."/>
            <person name="Hunt J.F."/>
            <person name="Tong L."/>
        </authorList>
    </citation>
    <scope>X-RAY CRYSTALLOGRAPHY (2.80 ANGSTROMS) OF 2-322</scope>
</reference>
<reference key="3">
    <citation type="submission" date="2006-11" db="PDB data bank">
        <title>Crystal structure of hypothetical protein (NP_244435.1) from Bacillus halodurans at 2.60 A resolution.</title>
        <authorList>
            <consortium name="Joint Center for Structural Genomics (JCSG)"/>
        </authorList>
    </citation>
    <scope>X-RAY CRYSTALLOGRAPHY (2.60 ANGSTROMS) OF 2-322 IN COMPLEX WITH NAD</scope>
</reference>
<feature type="chain" id="PRO_0000107803" description="Gluconeogenesis factor">
    <location>
        <begin position="1"/>
        <end position="322"/>
    </location>
</feature>
<feature type="binding site" evidence="2">
    <location>
        <position position="13"/>
    </location>
    <ligand>
        <name>NAD(+)</name>
        <dbReference type="ChEBI" id="CHEBI:57540"/>
    </ligand>
</feature>
<feature type="binding site" evidence="2">
    <location>
        <begin position="217"/>
        <end position="219"/>
    </location>
    <ligand>
        <name>NAD(+)</name>
        <dbReference type="ChEBI" id="CHEBI:57540"/>
    </ligand>
</feature>
<feature type="binding site" evidence="2">
    <location>
        <begin position="263"/>
        <end position="267"/>
    </location>
    <ligand>
        <name>NAD(+)</name>
        <dbReference type="ChEBI" id="CHEBI:57540"/>
    </ligand>
</feature>
<feature type="binding site" evidence="2">
    <location>
        <begin position="300"/>
        <end position="301"/>
    </location>
    <ligand>
        <name>NAD(+)</name>
        <dbReference type="ChEBI" id="CHEBI:57540"/>
    </ligand>
</feature>
<feature type="strand" evidence="4">
    <location>
        <begin position="4"/>
        <end position="10"/>
    </location>
</feature>
<feature type="helix" evidence="4">
    <location>
        <begin position="13"/>
        <end position="22"/>
    </location>
</feature>
<feature type="strand" evidence="4">
    <location>
        <begin position="25"/>
        <end position="33"/>
    </location>
</feature>
<feature type="helix" evidence="4">
    <location>
        <begin position="40"/>
        <end position="49"/>
    </location>
</feature>
<feature type="helix" evidence="4">
    <location>
        <begin position="55"/>
        <end position="64"/>
    </location>
</feature>
<feature type="helix" evidence="4">
    <location>
        <begin position="69"/>
        <end position="76"/>
    </location>
</feature>
<feature type="strand" evidence="3">
    <location>
        <begin position="83"/>
        <end position="85"/>
    </location>
</feature>
<feature type="helix" evidence="4">
    <location>
        <begin position="90"/>
        <end position="102"/>
    </location>
</feature>
<feature type="helix" evidence="4">
    <location>
        <begin position="105"/>
        <end position="115"/>
    </location>
</feature>
<feature type="strand" evidence="4">
    <location>
        <begin position="119"/>
        <end position="125"/>
    </location>
</feature>
<feature type="strand" evidence="4">
    <location>
        <begin position="131"/>
        <end position="136"/>
    </location>
</feature>
<feature type="strand" evidence="4">
    <location>
        <begin position="141"/>
        <end position="144"/>
    </location>
</feature>
<feature type="turn" evidence="4">
    <location>
        <begin position="145"/>
        <end position="147"/>
    </location>
</feature>
<feature type="helix" evidence="4">
    <location>
        <begin position="148"/>
        <end position="151"/>
    </location>
</feature>
<feature type="strand" evidence="4">
    <location>
        <begin position="155"/>
        <end position="162"/>
    </location>
</feature>
<feature type="helix" evidence="4">
    <location>
        <begin position="169"/>
        <end position="177"/>
    </location>
</feature>
<feature type="strand" evidence="4">
    <location>
        <begin position="179"/>
        <end position="183"/>
    </location>
</feature>
<feature type="turn" evidence="4">
    <location>
        <begin position="188"/>
        <end position="191"/>
    </location>
</feature>
<feature type="helix" evidence="4">
    <location>
        <begin position="192"/>
        <end position="196"/>
    </location>
</feature>
<feature type="helix" evidence="4">
    <location>
        <begin position="201"/>
        <end position="207"/>
    </location>
</feature>
<feature type="strand" evidence="4">
    <location>
        <begin position="210"/>
        <end position="215"/>
    </location>
</feature>
<feature type="turn" evidence="4">
    <location>
        <begin position="222"/>
        <end position="224"/>
    </location>
</feature>
<feature type="helix" evidence="4">
    <location>
        <begin position="230"/>
        <end position="241"/>
    </location>
</feature>
<feature type="strand" evidence="4">
    <location>
        <begin position="243"/>
        <end position="245"/>
    </location>
</feature>
<feature type="strand" evidence="4">
    <location>
        <begin position="247"/>
        <end position="252"/>
    </location>
</feature>
<feature type="helix" evidence="4">
    <location>
        <begin position="258"/>
        <end position="265"/>
    </location>
</feature>
<feature type="turn" evidence="4">
    <location>
        <begin position="266"/>
        <end position="268"/>
    </location>
</feature>
<feature type="helix" evidence="4">
    <location>
        <begin position="276"/>
        <end position="281"/>
    </location>
</feature>
<feature type="strand" evidence="4">
    <location>
        <begin position="285"/>
        <end position="289"/>
    </location>
</feature>
<feature type="strand" evidence="4">
    <location>
        <begin position="292"/>
        <end position="294"/>
    </location>
</feature>
<feature type="strand" evidence="4">
    <location>
        <begin position="299"/>
        <end position="301"/>
    </location>
</feature>
<feature type="helix" evidence="4">
    <location>
        <begin position="303"/>
        <end position="311"/>
    </location>
</feature>
<protein>
    <recommendedName>
        <fullName evidence="1">Gluconeogenesis factor</fullName>
    </recommendedName>
</protein>
<name>GNGF_HALH5</name>
<proteinExistence type="evidence at protein level"/>
<keyword id="KW-0002">3D-structure</keyword>
<keyword id="KW-0963">Cytoplasm</keyword>
<keyword id="KW-0520">NAD</keyword>
<keyword id="KW-1185">Reference proteome</keyword>
<comment type="function">
    <text evidence="1">Required for morphogenesis under gluconeogenic growth conditions.</text>
</comment>
<comment type="subcellular location">
    <subcellularLocation>
        <location evidence="1">Cytoplasm</location>
    </subcellularLocation>
</comment>
<comment type="similarity">
    <text evidence="1">Belongs to the gluconeogenesis factor family.</text>
</comment>
<dbReference type="EMBL" id="BA000004">
    <property type="protein sequence ID" value="BAB07287.1"/>
    <property type="molecule type" value="Genomic_DNA"/>
</dbReference>
<dbReference type="PIR" id="H84095">
    <property type="entry name" value="H84095"/>
</dbReference>
<dbReference type="RefSeq" id="WP_010899696.1">
    <property type="nucleotide sequence ID" value="NC_002570.2"/>
</dbReference>
<dbReference type="PDB" id="2HZB">
    <property type="method" value="X-ray"/>
    <property type="resolution" value="2.80 A"/>
    <property type="chains" value="A/B/C/D=1-322"/>
</dbReference>
<dbReference type="PDB" id="2O2Z">
    <property type="method" value="X-ray"/>
    <property type="resolution" value="2.60 A"/>
    <property type="chains" value="A/B/C/D=1-322"/>
</dbReference>
<dbReference type="PDBsum" id="2HZB"/>
<dbReference type="PDBsum" id="2O2Z"/>
<dbReference type="SMR" id="Q9K706"/>
<dbReference type="STRING" id="272558.gene:10729481"/>
<dbReference type="KEGG" id="bha:BH3568"/>
<dbReference type="eggNOG" id="COG0391">
    <property type="taxonomic scope" value="Bacteria"/>
</dbReference>
<dbReference type="HOGENOM" id="CLU_044041_0_1_9"/>
<dbReference type="OrthoDB" id="9783842at2"/>
<dbReference type="EvolutionaryTrace" id="Q9K706"/>
<dbReference type="Proteomes" id="UP000001258">
    <property type="component" value="Chromosome"/>
</dbReference>
<dbReference type="GO" id="GO:0005737">
    <property type="term" value="C:cytoplasm"/>
    <property type="evidence" value="ECO:0007669"/>
    <property type="project" value="UniProtKB-SubCell"/>
</dbReference>
<dbReference type="GO" id="GO:0043743">
    <property type="term" value="F:LPPG:FO 2-phospho-L-lactate transferase activity"/>
    <property type="evidence" value="ECO:0007669"/>
    <property type="project" value="InterPro"/>
</dbReference>
<dbReference type="GO" id="GO:0008360">
    <property type="term" value="P:regulation of cell shape"/>
    <property type="evidence" value="ECO:0007669"/>
    <property type="project" value="UniProtKB-UniRule"/>
</dbReference>
<dbReference type="CDD" id="cd07044">
    <property type="entry name" value="CofD_YvcK"/>
    <property type="match status" value="1"/>
</dbReference>
<dbReference type="Gene3D" id="3.40.50.10680">
    <property type="entry name" value="CofD-like domains"/>
    <property type="match status" value="1"/>
</dbReference>
<dbReference type="HAMAP" id="MF_00973">
    <property type="entry name" value="Gluconeogen_factor"/>
    <property type="match status" value="1"/>
</dbReference>
<dbReference type="InterPro" id="IPR002882">
    <property type="entry name" value="CofD"/>
</dbReference>
<dbReference type="InterPro" id="IPR038136">
    <property type="entry name" value="CofD-like_dom_sf"/>
</dbReference>
<dbReference type="InterPro" id="IPR010119">
    <property type="entry name" value="Gluconeogen_factor"/>
</dbReference>
<dbReference type="NCBIfam" id="TIGR01826">
    <property type="entry name" value="CofD_related"/>
    <property type="match status" value="1"/>
</dbReference>
<dbReference type="PANTHER" id="PTHR30135:SF3">
    <property type="entry name" value="GLUCONEOGENESIS FACTOR-RELATED"/>
    <property type="match status" value="1"/>
</dbReference>
<dbReference type="PANTHER" id="PTHR30135">
    <property type="entry name" value="UNCHARACTERIZED PROTEIN YVCK-RELATED"/>
    <property type="match status" value="1"/>
</dbReference>
<dbReference type="Pfam" id="PF01933">
    <property type="entry name" value="CofD"/>
    <property type="match status" value="1"/>
</dbReference>
<dbReference type="SUPFAM" id="SSF142338">
    <property type="entry name" value="CofD-like"/>
    <property type="match status" value="1"/>
</dbReference>
<organism>
    <name type="scientific">Halalkalibacterium halodurans (strain ATCC BAA-125 / DSM 18197 / FERM 7344 / JCM 9153 / C-125)</name>
    <name type="common">Bacillus halodurans</name>
    <dbReference type="NCBI Taxonomy" id="272558"/>
    <lineage>
        <taxon>Bacteria</taxon>
        <taxon>Bacillati</taxon>
        <taxon>Bacillota</taxon>
        <taxon>Bacilli</taxon>
        <taxon>Bacillales</taxon>
        <taxon>Bacillaceae</taxon>
        <taxon>Halalkalibacterium (ex Joshi et al. 2022)</taxon>
    </lineage>
</organism>
<sequence>MKKKNVVVFGGGTGLSVLLRGLKTFPVSITAIVTVADDGGSSGRLRKELDIPPPGDVRNVLVALSEVEPLLEQLFQHRFENGNGLSGHSLGNLLLAGMTSITGDFARGISEMSKVLNVRGKVLPASNRSIILHGEMEDGTIVTGESSIPKAGKKIKRVFLTPKDTKPLREGLEAIRKADVIVIGPGSLYTSVLPNLLVPGICEAIKQSTARKVYICNVMTQNGETDGYTASDHLQAIMDHCGVGIVDDILVHGEPISDTVKAKYAKEKAEPVIVDEHKLKALGVGTISDYFVLEQDDVLRHNASKVSEAILEGKPRTSSSIQ</sequence>
<gene>
    <name type="ordered locus">BH3568</name>
</gene>
<evidence type="ECO:0000255" key="1">
    <source>
        <dbReference type="HAMAP-Rule" id="MF_00973"/>
    </source>
</evidence>
<evidence type="ECO:0000269" key="2">
    <source ref="3"/>
</evidence>
<evidence type="ECO:0007829" key="3">
    <source>
        <dbReference type="PDB" id="2HZB"/>
    </source>
</evidence>
<evidence type="ECO:0007829" key="4">
    <source>
        <dbReference type="PDB" id="2O2Z"/>
    </source>
</evidence>